<protein>
    <recommendedName>
        <fullName evidence="1">MEMO1 family protein PF1638</fullName>
    </recommendedName>
</protein>
<keyword id="KW-1185">Reference proteome</keyword>
<feature type="chain" id="PRO_0000134386" description="MEMO1 family protein PF1638">
    <location>
        <begin position="1"/>
        <end position="292"/>
    </location>
</feature>
<proteinExistence type="inferred from homology"/>
<accession>Q8U0F2</accession>
<comment type="similarity">
    <text evidence="1">Belongs to the MEMO1 family.</text>
</comment>
<dbReference type="EMBL" id="AE009950">
    <property type="protein sequence ID" value="AAL81762.1"/>
    <property type="molecule type" value="Genomic_DNA"/>
</dbReference>
<dbReference type="RefSeq" id="WP_011012785.1">
    <property type="nucleotide sequence ID" value="NZ_CP023154.1"/>
</dbReference>
<dbReference type="SMR" id="Q8U0F2"/>
<dbReference type="STRING" id="186497.PF1638"/>
<dbReference type="PaxDb" id="186497-PF1638"/>
<dbReference type="KEGG" id="pfu:PF1638"/>
<dbReference type="PATRIC" id="fig|186497.12.peg.1704"/>
<dbReference type="eggNOG" id="arCOG01728">
    <property type="taxonomic scope" value="Archaea"/>
</dbReference>
<dbReference type="HOGENOM" id="CLU_038085_2_0_2"/>
<dbReference type="OrthoDB" id="372162at2157"/>
<dbReference type="PhylomeDB" id="Q8U0F2"/>
<dbReference type="Proteomes" id="UP000001013">
    <property type="component" value="Chromosome"/>
</dbReference>
<dbReference type="CDD" id="cd07361">
    <property type="entry name" value="MEMO_like"/>
    <property type="match status" value="1"/>
</dbReference>
<dbReference type="Gene3D" id="3.40.830.10">
    <property type="entry name" value="LigB-like"/>
    <property type="match status" value="1"/>
</dbReference>
<dbReference type="HAMAP" id="MF_00055">
    <property type="entry name" value="MEMO1"/>
    <property type="match status" value="1"/>
</dbReference>
<dbReference type="InterPro" id="IPR002737">
    <property type="entry name" value="MEMO1_fam"/>
</dbReference>
<dbReference type="NCBIfam" id="TIGR04336">
    <property type="entry name" value="AmmeMemoSam_B"/>
    <property type="match status" value="1"/>
</dbReference>
<dbReference type="NCBIfam" id="NF001987">
    <property type="entry name" value="PRK00782.1"/>
    <property type="match status" value="1"/>
</dbReference>
<dbReference type="PANTHER" id="PTHR11060">
    <property type="entry name" value="PROTEIN MEMO1"/>
    <property type="match status" value="1"/>
</dbReference>
<dbReference type="PANTHER" id="PTHR11060:SF0">
    <property type="entry name" value="PROTEIN MEMO1"/>
    <property type="match status" value="1"/>
</dbReference>
<dbReference type="Pfam" id="PF01875">
    <property type="entry name" value="Memo"/>
    <property type="match status" value="1"/>
</dbReference>
<dbReference type="SUPFAM" id="SSF53213">
    <property type="entry name" value="LigB-like"/>
    <property type="match status" value="1"/>
</dbReference>
<reference key="1">
    <citation type="journal article" date="1999" name="Genetics">
        <title>Divergence of the hyperthermophilic archaea Pyrococcus furiosus and P. horikoshii inferred from complete genomic sequences.</title>
        <authorList>
            <person name="Maeder D.L."/>
            <person name="Weiss R.B."/>
            <person name="Dunn D.M."/>
            <person name="Cherry J.L."/>
            <person name="Gonzalez J.M."/>
            <person name="DiRuggiero J."/>
            <person name="Robb F.T."/>
        </authorList>
    </citation>
    <scope>NUCLEOTIDE SEQUENCE [LARGE SCALE GENOMIC DNA]</scope>
    <source>
        <strain>ATCC 43587 / DSM 3638 / JCM 8422 / Vc1</strain>
    </source>
</reference>
<organism>
    <name type="scientific">Pyrococcus furiosus (strain ATCC 43587 / DSM 3638 / JCM 8422 / Vc1)</name>
    <dbReference type="NCBI Taxonomy" id="186497"/>
    <lineage>
        <taxon>Archaea</taxon>
        <taxon>Methanobacteriati</taxon>
        <taxon>Methanobacteriota</taxon>
        <taxon>Thermococci</taxon>
        <taxon>Thermococcales</taxon>
        <taxon>Thermococcaceae</taxon>
        <taxon>Pyrococcus</taxon>
    </lineage>
</organism>
<name>Y1638_PYRFU</name>
<gene>
    <name type="ordered locus">PF1638</name>
</gene>
<evidence type="ECO:0000255" key="1">
    <source>
        <dbReference type="HAMAP-Rule" id="MF_00055"/>
    </source>
</evidence>
<sequence length="292" mass="32542">MIRRAVVAGQFYPDDAELVEMLKRFFTDLGEEGNSRRITAGVAPHAGYIFSGYTASRTYKAIYEDGLPEVFVILGPNHTGLGSPIAVYPKGEWETPLGRIKVDEKLARRITELSEIADLDDLAHKYEHSIEVQLPFIQYLAELSGKDVKIVPITLGIQDEEVSYALGKAIYEASQELGRDIVVIASTDFMHYGEFYGYVPFRARADELPNLVKEWDMRVIRRILDFDVEGMFEEINAMNHTMCGPGGVGVGIVYSKLAGAIEAELLHYTTSFEVSRSTDAIVGYASIVMRKA</sequence>